<reference key="1">
    <citation type="journal article" date="2004" name="Proc. Natl. Acad. Sci. U.S.A.">
        <title>Insights into the evolution of Yersinia pestis through whole-genome comparison with Yersinia pseudotuberculosis.</title>
        <authorList>
            <person name="Chain P.S.G."/>
            <person name="Carniel E."/>
            <person name="Larimer F.W."/>
            <person name="Lamerdin J."/>
            <person name="Stoutland P.O."/>
            <person name="Regala W.M."/>
            <person name="Georgescu A.M."/>
            <person name="Vergez L.M."/>
            <person name="Land M.L."/>
            <person name="Motin V.L."/>
            <person name="Brubaker R.R."/>
            <person name="Fowler J."/>
            <person name="Hinnebusch J."/>
            <person name="Marceau M."/>
            <person name="Medigue C."/>
            <person name="Simonet M."/>
            <person name="Chenal-Francisque V."/>
            <person name="Souza B."/>
            <person name="Dacheux D."/>
            <person name="Elliott J.M."/>
            <person name="Derbise A."/>
            <person name="Hauser L.J."/>
            <person name="Garcia E."/>
        </authorList>
    </citation>
    <scope>NUCLEOTIDE SEQUENCE [LARGE SCALE GENOMIC DNA]</scope>
    <source>
        <strain>IP32953</strain>
    </source>
</reference>
<comment type="function">
    <text evidence="1">Multifunctional enzyme that catalyzes the SAM-dependent methylations of uroporphyrinogen III at position C-2 and C-7 to form precorrin-2 via precorrin-1. Then it catalyzes the NAD-dependent ring dehydrogenation of precorrin-2 to yield sirohydrochlorin. Finally, it catalyzes the ferrochelation of sirohydrochlorin to yield siroheme.</text>
</comment>
<comment type="catalytic activity">
    <reaction evidence="1">
        <text>uroporphyrinogen III + 2 S-adenosyl-L-methionine = precorrin-2 + 2 S-adenosyl-L-homocysteine + H(+)</text>
        <dbReference type="Rhea" id="RHEA:32459"/>
        <dbReference type="ChEBI" id="CHEBI:15378"/>
        <dbReference type="ChEBI" id="CHEBI:57308"/>
        <dbReference type="ChEBI" id="CHEBI:57856"/>
        <dbReference type="ChEBI" id="CHEBI:58827"/>
        <dbReference type="ChEBI" id="CHEBI:59789"/>
        <dbReference type="EC" id="2.1.1.107"/>
    </reaction>
</comment>
<comment type="catalytic activity">
    <reaction evidence="1">
        <text>precorrin-2 + NAD(+) = sirohydrochlorin + NADH + 2 H(+)</text>
        <dbReference type="Rhea" id="RHEA:15613"/>
        <dbReference type="ChEBI" id="CHEBI:15378"/>
        <dbReference type="ChEBI" id="CHEBI:57540"/>
        <dbReference type="ChEBI" id="CHEBI:57945"/>
        <dbReference type="ChEBI" id="CHEBI:58351"/>
        <dbReference type="ChEBI" id="CHEBI:58827"/>
        <dbReference type="EC" id="1.3.1.76"/>
    </reaction>
</comment>
<comment type="catalytic activity">
    <reaction evidence="1">
        <text>siroheme + 2 H(+) = sirohydrochlorin + Fe(2+)</text>
        <dbReference type="Rhea" id="RHEA:24360"/>
        <dbReference type="ChEBI" id="CHEBI:15378"/>
        <dbReference type="ChEBI" id="CHEBI:29033"/>
        <dbReference type="ChEBI" id="CHEBI:58351"/>
        <dbReference type="ChEBI" id="CHEBI:60052"/>
        <dbReference type="EC" id="4.99.1.4"/>
    </reaction>
</comment>
<comment type="pathway">
    <text evidence="1">Cofactor biosynthesis; adenosylcobalamin biosynthesis; precorrin-2 from uroporphyrinogen III: step 1/1.</text>
</comment>
<comment type="pathway">
    <text evidence="1">Cofactor biosynthesis; adenosylcobalamin biosynthesis; sirohydrochlorin from precorrin-2: step 1/1.</text>
</comment>
<comment type="pathway">
    <text evidence="1">Porphyrin-containing compound metabolism; siroheme biosynthesis; precorrin-2 from uroporphyrinogen III: step 1/1.</text>
</comment>
<comment type="pathway">
    <text evidence="1">Porphyrin-containing compound metabolism; siroheme biosynthesis; siroheme from sirohydrochlorin: step 1/1.</text>
</comment>
<comment type="pathway">
    <text evidence="1">Porphyrin-containing compound metabolism; siroheme biosynthesis; sirohydrochlorin from precorrin-2: step 1/1.</text>
</comment>
<comment type="similarity">
    <text evidence="1">In the N-terminal section; belongs to the precorrin-2 dehydrogenase / sirohydrochlorin ferrochelatase family.</text>
</comment>
<comment type="similarity">
    <text evidence="1">In the C-terminal section; belongs to the precorrin methyltransferase family.</text>
</comment>
<dbReference type="EC" id="2.1.1.107" evidence="1"/>
<dbReference type="EC" id="1.3.1.76" evidence="1"/>
<dbReference type="EC" id="4.99.1.4" evidence="1"/>
<dbReference type="EMBL" id="BX936398">
    <property type="protein sequence ID" value="CAH22981.1"/>
    <property type="molecule type" value="Genomic_DNA"/>
</dbReference>
<dbReference type="RefSeq" id="WP_011193232.1">
    <property type="nucleotide sequence ID" value="NC_006155.1"/>
</dbReference>
<dbReference type="SMR" id="Q664M6"/>
<dbReference type="GeneID" id="49784263"/>
<dbReference type="KEGG" id="ypo:BZ17_2843"/>
<dbReference type="KEGG" id="yps:YPTB3743"/>
<dbReference type="PATRIC" id="fig|273123.14.peg.2983"/>
<dbReference type="UniPathway" id="UPA00148">
    <property type="reaction ID" value="UER00211"/>
</dbReference>
<dbReference type="UniPathway" id="UPA00148">
    <property type="reaction ID" value="UER00222"/>
</dbReference>
<dbReference type="UniPathway" id="UPA00262">
    <property type="reaction ID" value="UER00211"/>
</dbReference>
<dbReference type="UniPathway" id="UPA00262">
    <property type="reaction ID" value="UER00222"/>
</dbReference>
<dbReference type="UniPathway" id="UPA00262">
    <property type="reaction ID" value="UER00376"/>
</dbReference>
<dbReference type="Proteomes" id="UP000001011">
    <property type="component" value="Chromosome"/>
</dbReference>
<dbReference type="GO" id="GO:0051287">
    <property type="term" value="F:NAD binding"/>
    <property type="evidence" value="ECO:0007669"/>
    <property type="project" value="InterPro"/>
</dbReference>
<dbReference type="GO" id="GO:0043115">
    <property type="term" value="F:precorrin-2 dehydrogenase activity"/>
    <property type="evidence" value="ECO:0007669"/>
    <property type="project" value="UniProtKB-UniRule"/>
</dbReference>
<dbReference type="GO" id="GO:0051266">
    <property type="term" value="F:sirohydrochlorin ferrochelatase activity"/>
    <property type="evidence" value="ECO:0007669"/>
    <property type="project" value="UniProtKB-EC"/>
</dbReference>
<dbReference type="GO" id="GO:0004851">
    <property type="term" value="F:uroporphyrin-III C-methyltransferase activity"/>
    <property type="evidence" value="ECO:0007669"/>
    <property type="project" value="UniProtKB-UniRule"/>
</dbReference>
<dbReference type="GO" id="GO:0009236">
    <property type="term" value="P:cobalamin biosynthetic process"/>
    <property type="evidence" value="ECO:0007669"/>
    <property type="project" value="UniProtKB-UniRule"/>
</dbReference>
<dbReference type="GO" id="GO:0032259">
    <property type="term" value="P:methylation"/>
    <property type="evidence" value="ECO:0007669"/>
    <property type="project" value="UniProtKB-KW"/>
</dbReference>
<dbReference type="GO" id="GO:0019354">
    <property type="term" value="P:siroheme biosynthetic process"/>
    <property type="evidence" value="ECO:0007669"/>
    <property type="project" value="UniProtKB-UniRule"/>
</dbReference>
<dbReference type="CDD" id="cd11642">
    <property type="entry name" value="SUMT"/>
    <property type="match status" value="1"/>
</dbReference>
<dbReference type="FunFam" id="1.10.8.210:FF:000001">
    <property type="entry name" value="Siroheme synthase"/>
    <property type="match status" value="1"/>
</dbReference>
<dbReference type="FunFam" id="3.30.160.110:FF:000001">
    <property type="entry name" value="Siroheme synthase"/>
    <property type="match status" value="1"/>
</dbReference>
<dbReference type="FunFam" id="3.30.950.10:FF:000001">
    <property type="entry name" value="Siroheme synthase"/>
    <property type="match status" value="1"/>
</dbReference>
<dbReference type="FunFam" id="3.40.1010.10:FF:000001">
    <property type="entry name" value="Siroheme synthase"/>
    <property type="match status" value="1"/>
</dbReference>
<dbReference type="FunFam" id="3.40.50.720:FF:000092">
    <property type="entry name" value="Siroheme synthase"/>
    <property type="match status" value="1"/>
</dbReference>
<dbReference type="Gene3D" id="3.40.1010.10">
    <property type="entry name" value="Cobalt-precorrin-4 Transmethylase, Domain 1"/>
    <property type="match status" value="1"/>
</dbReference>
<dbReference type="Gene3D" id="3.30.950.10">
    <property type="entry name" value="Methyltransferase, Cobalt-precorrin-4 Transmethylase, Domain 2"/>
    <property type="match status" value="1"/>
</dbReference>
<dbReference type="Gene3D" id="3.40.50.720">
    <property type="entry name" value="NAD(P)-binding Rossmann-like Domain"/>
    <property type="match status" value="1"/>
</dbReference>
<dbReference type="Gene3D" id="1.10.8.210">
    <property type="entry name" value="Sirohaem synthase, dimerisation domain"/>
    <property type="match status" value="1"/>
</dbReference>
<dbReference type="Gene3D" id="3.30.160.110">
    <property type="entry name" value="Siroheme synthase, domain 2"/>
    <property type="match status" value="1"/>
</dbReference>
<dbReference type="HAMAP" id="MF_01646">
    <property type="entry name" value="Siroheme_synth"/>
    <property type="match status" value="1"/>
</dbReference>
<dbReference type="InterPro" id="IPR000878">
    <property type="entry name" value="4pyrrol_Mease"/>
</dbReference>
<dbReference type="InterPro" id="IPR035996">
    <property type="entry name" value="4pyrrol_Methylase_sf"/>
</dbReference>
<dbReference type="InterPro" id="IPR014777">
    <property type="entry name" value="4pyrrole_Mease_sub1"/>
</dbReference>
<dbReference type="InterPro" id="IPR014776">
    <property type="entry name" value="4pyrrole_Mease_sub2"/>
</dbReference>
<dbReference type="InterPro" id="IPR006366">
    <property type="entry name" value="CobA/CysG_C"/>
</dbReference>
<dbReference type="InterPro" id="IPR036291">
    <property type="entry name" value="NAD(P)-bd_dom_sf"/>
</dbReference>
<dbReference type="InterPro" id="IPR050161">
    <property type="entry name" value="Siro_Cobalamin_biosynth"/>
</dbReference>
<dbReference type="InterPro" id="IPR037115">
    <property type="entry name" value="Sirohaem_synt_dimer_dom_sf"/>
</dbReference>
<dbReference type="InterPro" id="IPR012409">
    <property type="entry name" value="Sirohaem_synth"/>
</dbReference>
<dbReference type="InterPro" id="IPR028281">
    <property type="entry name" value="Sirohaem_synthase_central"/>
</dbReference>
<dbReference type="InterPro" id="IPR019478">
    <property type="entry name" value="Sirohaem_synthase_dimer_dom"/>
</dbReference>
<dbReference type="InterPro" id="IPR006367">
    <property type="entry name" value="Sirohaem_synthase_N"/>
</dbReference>
<dbReference type="InterPro" id="IPR003043">
    <property type="entry name" value="Uropor_MeTrfase_CS"/>
</dbReference>
<dbReference type="NCBIfam" id="TIGR01469">
    <property type="entry name" value="cobA_cysG_Cterm"/>
    <property type="match status" value="1"/>
</dbReference>
<dbReference type="NCBIfam" id="TIGR01470">
    <property type="entry name" value="cysG_Nterm"/>
    <property type="match status" value="1"/>
</dbReference>
<dbReference type="NCBIfam" id="NF004790">
    <property type="entry name" value="PRK06136.1"/>
    <property type="match status" value="1"/>
</dbReference>
<dbReference type="NCBIfam" id="NF007922">
    <property type="entry name" value="PRK10637.1"/>
    <property type="match status" value="1"/>
</dbReference>
<dbReference type="PANTHER" id="PTHR45790:SF1">
    <property type="entry name" value="SIROHEME SYNTHASE"/>
    <property type="match status" value="1"/>
</dbReference>
<dbReference type="PANTHER" id="PTHR45790">
    <property type="entry name" value="SIROHEME SYNTHASE-RELATED"/>
    <property type="match status" value="1"/>
</dbReference>
<dbReference type="Pfam" id="PF10414">
    <property type="entry name" value="CysG_dimeriser"/>
    <property type="match status" value="1"/>
</dbReference>
<dbReference type="Pfam" id="PF13241">
    <property type="entry name" value="NAD_binding_7"/>
    <property type="match status" value="1"/>
</dbReference>
<dbReference type="Pfam" id="PF14824">
    <property type="entry name" value="Sirohm_synth_M"/>
    <property type="match status" value="1"/>
</dbReference>
<dbReference type="Pfam" id="PF00590">
    <property type="entry name" value="TP_methylase"/>
    <property type="match status" value="1"/>
</dbReference>
<dbReference type="PIRSF" id="PIRSF036426">
    <property type="entry name" value="Sirohaem_synth"/>
    <property type="match status" value="1"/>
</dbReference>
<dbReference type="SUPFAM" id="SSF51735">
    <property type="entry name" value="NAD(P)-binding Rossmann-fold domains"/>
    <property type="match status" value="1"/>
</dbReference>
<dbReference type="SUPFAM" id="SSF75615">
    <property type="entry name" value="Siroheme synthase middle domains-like"/>
    <property type="match status" value="1"/>
</dbReference>
<dbReference type="SUPFAM" id="SSF53790">
    <property type="entry name" value="Tetrapyrrole methylase"/>
    <property type="match status" value="1"/>
</dbReference>
<dbReference type="PROSITE" id="PS00839">
    <property type="entry name" value="SUMT_1"/>
    <property type="match status" value="1"/>
</dbReference>
<dbReference type="PROSITE" id="PS00840">
    <property type="entry name" value="SUMT_2"/>
    <property type="match status" value="1"/>
</dbReference>
<gene>
    <name evidence="1" type="primary">cysG2</name>
    <name type="ordered locus">YPTB3743</name>
</gene>
<feature type="chain" id="PRO_0000330579" description="Siroheme synthase 2">
    <location>
        <begin position="1"/>
        <end position="473"/>
    </location>
</feature>
<feature type="region of interest" description="Precorrin-2 dehydrogenase /sirohydrochlorin ferrochelatase" evidence="1">
    <location>
        <begin position="1"/>
        <end position="204"/>
    </location>
</feature>
<feature type="region of interest" description="Uroporphyrinogen-III C-methyltransferase" evidence="1">
    <location>
        <begin position="216"/>
        <end position="473"/>
    </location>
</feature>
<feature type="active site" description="Proton acceptor" evidence="1">
    <location>
        <position position="248"/>
    </location>
</feature>
<feature type="active site" description="Proton donor" evidence="1">
    <location>
        <position position="270"/>
    </location>
</feature>
<feature type="binding site" evidence="1">
    <location>
        <begin position="22"/>
        <end position="23"/>
    </location>
    <ligand>
        <name>NAD(+)</name>
        <dbReference type="ChEBI" id="CHEBI:57540"/>
    </ligand>
</feature>
<feature type="binding site" evidence="1">
    <location>
        <begin position="43"/>
        <end position="44"/>
    </location>
    <ligand>
        <name>NAD(+)</name>
        <dbReference type="ChEBI" id="CHEBI:57540"/>
    </ligand>
</feature>
<feature type="binding site" evidence="1">
    <location>
        <position position="225"/>
    </location>
    <ligand>
        <name>S-adenosyl-L-methionine</name>
        <dbReference type="ChEBI" id="CHEBI:59789"/>
    </ligand>
</feature>
<feature type="binding site" evidence="1">
    <location>
        <begin position="301"/>
        <end position="303"/>
    </location>
    <ligand>
        <name>S-adenosyl-L-methionine</name>
        <dbReference type="ChEBI" id="CHEBI:59789"/>
    </ligand>
</feature>
<feature type="binding site" evidence="1">
    <location>
        <position position="306"/>
    </location>
    <ligand>
        <name>S-adenosyl-L-methionine</name>
        <dbReference type="ChEBI" id="CHEBI:59789"/>
    </ligand>
</feature>
<feature type="binding site" evidence="1">
    <location>
        <begin position="331"/>
        <end position="332"/>
    </location>
    <ligand>
        <name>S-adenosyl-L-methionine</name>
        <dbReference type="ChEBI" id="CHEBI:59789"/>
    </ligand>
</feature>
<feature type="binding site" evidence="1">
    <location>
        <position position="382"/>
    </location>
    <ligand>
        <name>S-adenosyl-L-methionine</name>
        <dbReference type="ChEBI" id="CHEBI:59789"/>
    </ligand>
</feature>
<feature type="binding site" evidence="1">
    <location>
        <position position="411"/>
    </location>
    <ligand>
        <name>S-adenosyl-L-methionine</name>
        <dbReference type="ChEBI" id="CHEBI:59789"/>
    </ligand>
</feature>
<feature type="modified residue" description="Phosphoserine" evidence="1">
    <location>
        <position position="128"/>
    </location>
</feature>
<evidence type="ECO:0000255" key="1">
    <source>
        <dbReference type="HAMAP-Rule" id="MF_01646"/>
    </source>
</evidence>
<keyword id="KW-0169">Cobalamin biosynthesis</keyword>
<keyword id="KW-0456">Lyase</keyword>
<keyword id="KW-0489">Methyltransferase</keyword>
<keyword id="KW-0511">Multifunctional enzyme</keyword>
<keyword id="KW-0520">NAD</keyword>
<keyword id="KW-0560">Oxidoreductase</keyword>
<keyword id="KW-0597">Phosphoprotein</keyword>
<keyword id="KW-0627">Porphyrin biosynthesis</keyword>
<keyword id="KW-0949">S-adenosyl-L-methionine</keyword>
<keyword id="KW-0808">Transferase</keyword>
<organism>
    <name type="scientific">Yersinia pseudotuberculosis serotype I (strain IP32953)</name>
    <dbReference type="NCBI Taxonomy" id="273123"/>
    <lineage>
        <taxon>Bacteria</taxon>
        <taxon>Pseudomonadati</taxon>
        <taxon>Pseudomonadota</taxon>
        <taxon>Gammaproteobacteria</taxon>
        <taxon>Enterobacterales</taxon>
        <taxon>Yersiniaceae</taxon>
        <taxon>Yersinia</taxon>
    </lineage>
</organism>
<protein>
    <recommendedName>
        <fullName evidence="1">Siroheme synthase 2</fullName>
    </recommendedName>
    <domain>
        <recommendedName>
            <fullName evidence="1">Uroporphyrinogen-III C-methyltransferase 2</fullName>
            <shortName evidence="1">Urogen III methylase 2</shortName>
            <ecNumber evidence="1">2.1.1.107</ecNumber>
        </recommendedName>
        <alternativeName>
            <fullName evidence="1">SUMT 2</fullName>
        </alternativeName>
        <alternativeName>
            <fullName evidence="1">Uroporphyrinogen III methylase 2</fullName>
            <shortName evidence="1">UROM 2</shortName>
        </alternativeName>
    </domain>
    <domain>
        <recommendedName>
            <fullName evidence="1">Precorrin-2 dehydrogenase 2</fullName>
            <ecNumber evidence="1">1.3.1.76</ecNumber>
        </recommendedName>
    </domain>
    <domain>
        <recommendedName>
            <fullName evidence="1">Sirohydrochlorin ferrochelatase 2</fullName>
            <ecNumber evidence="1">4.99.1.4</ecNumber>
        </recommendedName>
    </domain>
</protein>
<sequence length="473" mass="51918">MDYFPIFCQLQHKACLLVGGGEIAERKARLLLDAGALVTVNACEFTPQFHHWADQGQLSLISGEFVPELLADKWLVIAATDQLSVNALVYQSANQQRIFCNVVDDPKRTSFIMPSIIDRSPIMIAVSSGGKAPVLARLLREKLEALLPQHLGQLAQLAGNLRQRVKQHFAAMTERRRFWEKLLTHDRLAQSLANNDHVQADQHVEQLFSAPLTDRGEVVLVGAGPGDAGLLTLKGLQQIQQADVVVYDRLVSDEVMNLVRRDAERIFVGKQSGHHCVPQEQINQILLQQAQSGKRVVRLKGGDPFIFGRGGEELEELAGYGIPFSVVPGITAASGCSAYSGIPLTHRDHAQSVRLVTGHAKKEGQLDWANLAAEKQTLVFYMGLSQAGEIQQQLIQHGMPATTQVALVENGTSRHQRVVSGELSQLALLSQQVSSPSLIIVGSVVSLREKLNWFSSRHHDDQPKVTECVAHVG</sequence>
<accession>Q664M6</accession>
<proteinExistence type="inferred from homology"/>
<name>CYSG2_YERPS</name>